<sequence>MPKITKIEVQKKNKERFNLFLDEQFEMGIDIDTLVKFNLKKGQQLEAADMAEIQKYDHYRIGLNKAIQYLSYKKRTEKEVIQYLQKEEISEQAISEVIEYCYREKLIDHQDYAESLKNTMIRTTDKGPKIYQQKLYQLGIEPNIIEIFTELYREQQELDDIIQIAEKISKTKKGPQNKVKEKVMQSLIQKGFEMETIHAVLNEMDFTQDEAVLDDLLQRDLEKIYNKNRKKYTQQKLISKTIEGLMRKGYKYDKIKAKLEESGIADGTEEIE</sequence>
<name>RECX_STAAW</name>
<gene>
    <name type="primary">recX</name>
    <name type="ordered locus">MW1813</name>
</gene>
<accession>Q8NVU3</accession>
<comment type="function">
    <text evidence="1">Modulates RecA activity.</text>
</comment>
<comment type="subcellular location">
    <subcellularLocation>
        <location evidence="2">Cytoplasm</location>
    </subcellularLocation>
</comment>
<comment type="similarity">
    <text evidence="2">Belongs to the RecX family.</text>
</comment>
<organism>
    <name type="scientific">Staphylococcus aureus (strain MW2)</name>
    <dbReference type="NCBI Taxonomy" id="196620"/>
    <lineage>
        <taxon>Bacteria</taxon>
        <taxon>Bacillati</taxon>
        <taxon>Bacillota</taxon>
        <taxon>Bacilli</taxon>
        <taxon>Bacillales</taxon>
        <taxon>Staphylococcaceae</taxon>
        <taxon>Staphylococcus</taxon>
    </lineage>
</organism>
<evidence type="ECO:0000250" key="1"/>
<evidence type="ECO:0000305" key="2"/>
<proteinExistence type="inferred from homology"/>
<dbReference type="EMBL" id="BA000033">
    <property type="protein sequence ID" value="BAB95678.1"/>
    <property type="molecule type" value="Genomic_DNA"/>
</dbReference>
<dbReference type="RefSeq" id="WP_001124419.1">
    <property type="nucleotide sequence ID" value="NC_003923.1"/>
</dbReference>
<dbReference type="SMR" id="Q8NVU3"/>
<dbReference type="KEGG" id="sam:MW1813"/>
<dbReference type="HOGENOM" id="CLU_066607_4_0_9"/>
<dbReference type="GO" id="GO:0005737">
    <property type="term" value="C:cytoplasm"/>
    <property type="evidence" value="ECO:0007669"/>
    <property type="project" value="UniProtKB-SubCell"/>
</dbReference>
<dbReference type="GO" id="GO:0006282">
    <property type="term" value="P:regulation of DNA repair"/>
    <property type="evidence" value="ECO:0007669"/>
    <property type="project" value="UniProtKB-UniRule"/>
</dbReference>
<dbReference type="Gene3D" id="1.10.10.10">
    <property type="entry name" value="Winged helix-like DNA-binding domain superfamily/Winged helix DNA-binding domain"/>
    <property type="match status" value="4"/>
</dbReference>
<dbReference type="HAMAP" id="MF_01114">
    <property type="entry name" value="RecX"/>
    <property type="match status" value="1"/>
</dbReference>
<dbReference type="InterPro" id="IPR053926">
    <property type="entry name" value="RecX_HTH_1st"/>
</dbReference>
<dbReference type="InterPro" id="IPR053925">
    <property type="entry name" value="RecX_HTH_3rd"/>
</dbReference>
<dbReference type="InterPro" id="IPR003783">
    <property type="entry name" value="Regulatory_RecX"/>
</dbReference>
<dbReference type="InterPro" id="IPR036388">
    <property type="entry name" value="WH-like_DNA-bd_sf"/>
</dbReference>
<dbReference type="NCBIfam" id="NF010733">
    <property type="entry name" value="PRK14135.1"/>
    <property type="match status" value="1"/>
</dbReference>
<dbReference type="PANTHER" id="PTHR33602">
    <property type="entry name" value="REGULATORY PROTEIN RECX FAMILY PROTEIN"/>
    <property type="match status" value="1"/>
</dbReference>
<dbReference type="PANTHER" id="PTHR33602:SF1">
    <property type="entry name" value="REGULATORY PROTEIN RECX FAMILY PROTEIN"/>
    <property type="match status" value="1"/>
</dbReference>
<dbReference type="Pfam" id="PF21982">
    <property type="entry name" value="RecX_HTH1"/>
    <property type="match status" value="1"/>
</dbReference>
<dbReference type="Pfam" id="PF21981">
    <property type="entry name" value="RecX_HTH3"/>
    <property type="match status" value="1"/>
</dbReference>
<feature type="chain" id="PRO_0000162474" description="Regulatory protein RecX">
    <location>
        <begin position="1"/>
        <end position="272"/>
    </location>
</feature>
<reference key="1">
    <citation type="journal article" date="2002" name="Lancet">
        <title>Genome and virulence determinants of high virulence community-acquired MRSA.</title>
        <authorList>
            <person name="Baba T."/>
            <person name="Takeuchi F."/>
            <person name="Kuroda M."/>
            <person name="Yuzawa H."/>
            <person name="Aoki K."/>
            <person name="Oguchi A."/>
            <person name="Nagai Y."/>
            <person name="Iwama N."/>
            <person name="Asano K."/>
            <person name="Naimi T."/>
            <person name="Kuroda H."/>
            <person name="Cui L."/>
            <person name="Yamamoto K."/>
            <person name="Hiramatsu K."/>
        </authorList>
    </citation>
    <scope>NUCLEOTIDE SEQUENCE [LARGE SCALE GENOMIC DNA]</scope>
    <source>
        <strain>MW2</strain>
    </source>
</reference>
<keyword id="KW-0963">Cytoplasm</keyword>
<protein>
    <recommendedName>
        <fullName>Regulatory protein RecX</fullName>
    </recommendedName>
</protein>